<proteinExistence type="inferred from homology"/>
<name>KDSB_GEOSL</name>
<dbReference type="EC" id="2.7.7.38" evidence="1"/>
<dbReference type="EMBL" id="AE017180">
    <property type="protein sequence ID" value="AAR35272.2"/>
    <property type="molecule type" value="Genomic_DNA"/>
</dbReference>
<dbReference type="RefSeq" id="NP_952945.2">
    <property type="nucleotide sequence ID" value="NC_002939.5"/>
</dbReference>
<dbReference type="RefSeq" id="WP_010942541.1">
    <property type="nucleotide sequence ID" value="NC_002939.5"/>
</dbReference>
<dbReference type="SMR" id="Q74BY2"/>
<dbReference type="FunCoup" id="Q74BY2">
    <property type="interactions" value="420"/>
</dbReference>
<dbReference type="STRING" id="243231.GSU1896"/>
<dbReference type="EnsemblBacteria" id="AAR35272">
    <property type="protein sequence ID" value="AAR35272"/>
    <property type="gene ID" value="GSU1896"/>
</dbReference>
<dbReference type="KEGG" id="gsu:GSU1896"/>
<dbReference type="PATRIC" id="fig|243231.5.peg.1934"/>
<dbReference type="eggNOG" id="COG1212">
    <property type="taxonomic scope" value="Bacteria"/>
</dbReference>
<dbReference type="HOGENOM" id="CLU_065038_0_1_7"/>
<dbReference type="InParanoid" id="Q74BY2"/>
<dbReference type="OrthoDB" id="9815559at2"/>
<dbReference type="UniPathway" id="UPA00030"/>
<dbReference type="UniPathway" id="UPA00358">
    <property type="reaction ID" value="UER00476"/>
</dbReference>
<dbReference type="Proteomes" id="UP000000577">
    <property type="component" value="Chromosome"/>
</dbReference>
<dbReference type="GO" id="GO:0005829">
    <property type="term" value="C:cytosol"/>
    <property type="evidence" value="ECO:0000318"/>
    <property type="project" value="GO_Central"/>
</dbReference>
<dbReference type="GO" id="GO:0008690">
    <property type="term" value="F:3-deoxy-manno-octulosonate cytidylyltransferase activity"/>
    <property type="evidence" value="ECO:0000318"/>
    <property type="project" value="GO_Central"/>
</dbReference>
<dbReference type="GO" id="GO:0033468">
    <property type="term" value="P:CMP-keto-3-deoxy-D-manno-octulosonic acid biosynthetic process"/>
    <property type="evidence" value="ECO:0007669"/>
    <property type="project" value="UniProtKB-UniRule"/>
</dbReference>
<dbReference type="GO" id="GO:0009103">
    <property type="term" value="P:lipopolysaccharide biosynthetic process"/>
    <property type="evidence" value="ECO:0007669"/>
    <property type="project" value="UniProtKB-UniRule"/>
</dbReference>
<dbReference type="CDD" id="cd02517">
    <property type="entry name" value="CMP-KDO-Synthetase"/>
    <property type="match status" value="1"/>
</dbReference>
<dbReference type="FunFam" id="3.90.550.10:FF:000011">
    <property type="entry name" value="3-deoxy-manno-octulosonate cytidylyltransferase"/>
    <property type="match status" value="1"/>
</dbReference>
<dbReference type="Gene3D" id="3.90.550.10">
    <property type="entry name" value="Spore Coat Polysaccharide Biosynthesis Protein SpsA, Chain A"/>
    <property type="match status" value="1"/>
</dbReference>
<dbReference type="HAMAP" id="MF_00057">
    <property type="entry name" value="KdsB"/>
    <property type="match status" value="1"/>
</dbReference>
<dbReference type="InterPro" id="IPR003329">
    <property type="entry name" value="Cytidylyl_trans"/>
</dbReference>
<dbReference type="InterPro" id="IPR004528">
    <property type="entry name" value="KdsB"/>
</dbReference>
<dbReference type="InterPro" id="IPR029044">
    <property type="entry name" value="Nucleotide-diphossugar_trans"/>
</dbReference>
<dbReference type="NCBIfam" id="TIGR00466">
    <property type="entry name" value="kdsB"/>
    <property type="match status" value="1"/>
</dbReference>
<dbReference type="NCBIfam" id="NF003950">
    <property type="entry name" value="PRK05450.1-3"/>
    <property type="match status" value="1"/>
</dbReference>
<dbReference type="NCBIfam" id="NF003952">
    <property type="entry name" value="PRK05450.1-5"/>
    <property type="match status" value="1"/>
</dbReference>
<dbReference type="NCBIfam" id="NF009905">
    <property type="entry name" value="PRK13368.1"/>
    <property type="match status" value="1"/>
</dbReference>
<dbReference type="PANTHER" id="PTHR42866">
    <property type="entry name" value="3-DEOXY-MANNO-OCTULOSONATE CYTIDYLYLTRANSFERASE"/>
    <property type="match status" value="1"/>
</dbReference>
<dbReference type="PANTHER" id="PTHR42866:SF2">
    <property type="entry name" value="3-DEOXY-MANNO-OCTULOSONATE CYTIDYLYLTRANSFERASE, MITOCHONDRIAL"/>
    <property type="match status" value="1"/>
</dbReference>
<dbReference type="Pfam" id="PF02348">
    <property type="entry name" value="CTP_transf_3"/>
    <property type="match status" value="1"/>
</dbReference>
<dbReference type="SUPFAM" id="SSF53448">
    <property type="entry name" value="Nucleotide-diphospho-sugar transferases"/>
    <property type="match status" value="1"/>
</dbReference>
<protein>
    <recommendedName>
        <fullName evidence="1">3-deoxy-manno-octulosonate cytidylyltransferase</fullName>
        <ecNumber evidence="1">2.7.7.38</ecNumber>
    </recommendedName>
    <alternativeName>
        <fullName evidence="1">CMP-2-keto-3-deoxyoctulosonic acid synthase</fullName>
        <shortName evidence="1">CKS</shortName>
        <shortName evidence="1">CMP-KDO synthase</shortName>
    </alternativeName>
</protein>
<evidence type="ECO:0000255" key="1">
    <source>
        <dbReference type="HAMAP-Rule" id="MF_00057"/>
    </source>
</evidence>
<comment type="function">
    <text evidence="1">Activates KDO (a required 8-carbon sugar) for incorporation into bacterial lipopolysaccharide in Gram-negative bacteria.</text>
</comment>
<comment type="catalytic activity">
    <reaction evidence="1">
        <text>3-deoxy-alpha-D-manno-oct-2-ulosonate + CTP = CMP-3-deoxy-beta-D-manno-octulosonate + diphosphate</text>
        <dbReference type="Rhea" id="RHEA:23448"/>
        <dbReference type="ChEBI" id="CHEBI:33019"/>
        <dbReference type="ChEBI" id="CHEBI:37563"/>
        <dbReference type="ChEBI" id="CHEBI:85986"/>
        <dbReference type="ChEBI" id="CHEBI:85987"/>
        <dbReference type="EC" id="2.7.7.38"/>
    </reaction>
</comment>
<comment type="pathway">
    <text evidence="1">Nucleotide-sugar biosynthesis; CMP-3-deoxy-D-manno-octulosonate biosynthesis; CMP-3-deoxy-D-manno-octulosonate from 3-deoxy-D-manno-octulosonate and CTP: step 1/1.</text>
</comment>
<comment type="pathway">
    <text evidence="1">Bacterial outer membrane biogenesis; lipopolysaccharide biosynthesis.</text>
</comment>
<comment type="subcellular location">
    <subcellularLocation>
        <location evidence="1">Cytoplasm</location>
    </subcellularLocation>
</comment>
<comment type="similarity">
    <text evidence="1">Belongs to the KdsB family.</text>
</comment>
<reference key="1">
    <citation type="journal article" date="2003" name="Science">
        <title>Genome of Geobacter sulfurreducens: metal reduction in subsurface environments.</title>
        <authorList>
            <person name="Methe B.A."/>
            <person name="Nelson K.E."/>
            <person name="Eisen J.A."/>
            <person name="Paulsen I.T."/>
            <person name="Nelson W.C."/>
            <person name="Heidelberg J.F."/>
            <person name="Wu D."/>
            <person name="Wu M."/>
            <person name="Ward N.L."/>
            <person name="Beanan M.J."/>
            <person name="Dodson R.J."/>
            <person name="Madupu R."/>
            <person name="Brinkac L.M."/>
            <person name="Daugherty S.C."/>
            <person name="DeBoy R.T."/>
            <person name="Durkin A.S."/>
            <person name="Gwinn M.L."/>
            <person name="Kolonay J.F."/>
            <person name="Sullivan S.A."/>
            <person name="Haft D.H."/>
            <person name="Selengut J."/>
            <person name="Davidsen T.M."/>
            <person name="Zafar N."/>
            <person name="White O."/>
            <person name="Tran B."/>
            <person name="Romero C."/>
            <person name="Forberger H.A."/>
            <person name="Weidman J.F."/>
            <person name="Khouri H.M."/>
            <person name="Feldblyum T.V."/>
            <person name="Utterback T.R."/>
            <person name="Van Aken S.E."/>
            <person name="Lovley D.R."/>
            <person name="Fraser C.M."/>
        </authorList>
    </citation>
    <scope>NUCLEOTIDE SEQUENCE [LARGE SCALE GENOMIC DNA]</scope>
    <source>
        <strain>ATCC 51573 / DSM 12127 / PCA</strain>
    </source>
</reference>
<organism>
    <name type="scientific">Geobacter sulfurreducens (strain ATCC 51573 / DSM 12127 / PCA)</name>
    <dbReference type="NCBI Taxonomy" id="243231"/>
    <lineage>
        <taxon>Bacteria</taxon>
        <taxon>Pseudomonadati</taxon>
        <taxon>Thermodesulfobacteriota</taxon>
        <taxon>Desulfuromonadia</taxon>
        <taxon>Geobacterales</taxon>
        <taxon>Geobacteraceae</taxon>
        <taxon>Geobacter</taxon>
    </lineage>
</organism>
<feature type="chain" id="PRO_0000370074" description="3-deoxy-manno-octulosonate cytidylyltransferase">
    <location>
        <begin position="1"/>
        <end position="250"/>
    </location>
</feature>
<gene>
    <name evidence="1" type="primary">kdsB</name>
    <name type="ordered locus">GSU1896</name>
</gene>
<accession>Q74BY2</accession>
<sequence length="250" mass="27966">MNITAIIPARFASTRFPGKALADIAGKPMVQHVYERTARARLVSEVVVATDDDRIAQAVRGFGGRVEMTSRDHETGTDRLAEVASRIGAEIIVNVQGDEPLIEPAMIDEAIAPLAENPAVRMGTLKSRIRTLHDFLSPNVVKVVTDLEGYALYFSRSPLPFFRDKWNDLKDESFASGRLLCYKHVGLYVYRRDFLMEFAKMPPTALELAEKLEQLRALENGCRIRVVETAHESIGVDTPNDLEKVLEKLK</sequence>
<keyword id="KW-0963">Cytoplasm</keyword>
<keyword id="KW-0448">Lipopolysaccharide biosynthesis</keyword>
<keyword id="KW-0548">Nucleotidyltransferase</keyword>
<keyword id="KW-1185">Reference proteome</keyword>
<keyword id="KW-0808">Transferase</keyword>